<feature type="chain" id="PRO_0000320503" description="Protein SBE2">
    <location>
        <begin position="1"/>
        <end position="814"/>
    </location>
</feature>
<feature type="region of interest" description="Disordered" evidence="2">
    <location>
        <begin position="109"/>
        <end position="160"/>
    </location>
</feature>
<feature type="region of interest" description="Disordered" evidence="2">
    <location>
        <begin position="360"/>
        <end position="395"/>
    </location>
</feature>
<feature type="region of interest" description="Disordered" evidence="2">
    <location>
        <begin position="463"/>
        <end position="482"/>
    </location>
</feature>
<feature type="compositionally biased region" description="Gly residues" evidence="2">
    <location>
        <begin position="114"/>
        <end position="136"/>
    </location>
</feature>
<feature type="compositionally biased region" description="Low complexity" evidence="2">
    <location>
        <begin position="137"/>
        <end position="149"/>
    </location>
</feature>
<feature type="compositionally biased region" description="Basic and acidic residues" evidence="2">
    <location>
        <begin position="360"/>
        <end position="370"/>
    </location>
</feature>
<feature type="compositionally biased region" description="Basic and acidic residues" evidence="2">
    <location>
        <begin position="472"/>
        <end position="482"/>
    </location>
</feature>
<comment type="function">
    <text evidence="1">With SBE22, is involved in cell wall integrity and polarity processes like bud growth.</text>
</comment>
<comment type="subcellular location">
    <subcellularLocation>
        <location evidence="1">Golgi apparatus</location>
    </subcellularLocation>
</comment>
<comment type="similarity">
    <text evidence="3">Belongs to the SBE2 family.</text>
</comment>
<keyword id="KW-0961">Cell wall biogenesis/degradation</keyword>
<keyword id="KW-0333">Golgi apparatus</keyword>
<keyword id="KW-0653">Protein transport</keyword>
<keyword id="KW-1185">Reference proteome</keyword>
<keyword id="KW-0813">Transport</keyword>
<accession>Q75CM4</accession>
<gene>
    <name type="primary">SBE2</name>
    <name type="ordered locus">ACL105C</name>
</gene>
<organism>
    <name type="scientific">Eremothecium gossypii (strain ATCC 10895 / CBS 109.51 / FGSC 9923 / NRRL Y-1056)</name>
    <name type="common">Yeast</name>
    <name type="synonym">Ashbya gossypii</name>
    <dbReference type="NCBI Taxonomy" id="284811"/>
    <lineage>
        <taxon>Eukaryota</taxon>
        <taxon>Fungi</taxon>
        <taxon>Dikarya</taxon>
        <taxon>Ascomycota</taxon>
        <taxon>Saccharomycotina</taxon>
        <taxon>Saccharomycetes</taxon>
        <taxon>Saccharomycetales</taxon>
        <taxon>Saccharomycetaceae</taxon>
        <taxon>Eremothecium</taxon>
    </lineage>
</organism>
<dbReference type="EMBL" id="AE016816">
    <property type="protein sequence ID" value="AAS51123.2"/>
    <property type="molecule type" value="Genomic_DNA"/>
</dbReference>
<dbReference type="RefSeq" id="NP_983299.2">
    <property type="nucleotide sequence ID" value="NM_208652.2"/>
</dbReference>
<dbReference type="SMR" id="Q75CM4"/>
<dbReference type="FunCoup" id="Q75CM4">
    <property type="interactions" value="39"/>
</dbReference>
<dbReference type="EnsemblFungi" id="AAS51123">
    <property type="protein sequence ID" value="AAS51123"/>
    <property type="gene ID" value="AGOS_ACL105C"/>
</dbReference>
<dbReference type="GeneID" id="4619419"/>
<dbReference type="KEGG" id="ago:AGOS_ACL105C"/>
<dbReference type="eggNOG" id="ENOG502QR4N">
    <property type="taxonomic scope" value="Eukaryota"/>
</dbReference>
<dbReference type="HOGENOM" id="CLU_019068_0_0_1"/>
<dbReference type="InParanoid" id="Q75CM4"/>
<dbReference type="OMA" id="WWNILER"/>
<dbReference type="OrthoDB" id="289721at2759"/>
<dbReference type="Proteomes" id="UP000000591">
    <property type="component" value="Chromosome III"/>
</dbReference>
<dbReference type="GO" id="GO:0005794">
    <property type="term" value="C:Golgi apparatus"/>
    <property type="evidence" value="ECO:0007669"/>
    <property type="project" value="UniProtKB-SubCell"/>
</dbReference>
<dbReference type="GO" id="GO:0031505">
    <property type="term" value="P:fungal-type cell wall organization"/>
    <property type="evidence" value="ECO:0007669"/>
    <property type="project" value="InterPro"/>
</dbReference>
<dbReference type="GO" id="GO:0015031">
    <property type="term" value="P:protein transport"/>
    <property type="evidence" value="ECO:0007669"/>
    <property type="project" value="UniProtKB-KW"/>
</dbReference>
<dbReference type="InterPro" id="IPR031403">
    <property type="entry name" value="Sbe2/Sbe22_C"/>
</dbReference>
<dbReference type="InterPro" id="IPR053949">
    <property type="entry name" value="SBE2/SBE22_M"/>
</dbReference>
<dbReference type="InterPro" id="IPR053948">
    <property type="entry name" value="SBE2/SBE22_N"/>
</dbReference>
<dbReference type="Pfam" id="PF17076">
    <property type="entry name" value="SBE2_C"/>
    <property type="match status" value="1"/>
</dbReference>
<dbReference type="Pfam" id="PF22874">
    <property type="entry name" value="SBE2_M"/>
    <property type="match status" value="1"/>
</dbReference>
<dbReference type="Pfam" id="PF22876">
    <property type="entry name" value="SBE2_N"/>
    <property type="match status" value="2"/>
</dbReference>
<sequence>MEVPADSSSCLQVKRVHSLSVLKNKVSCFFLTIYWANALSRDSARVAGLDSEVRVRRDCELREGGMPSVLGTLDESMAEDAFGLGVDGYSEGASMFTADVTRLGRPLRRRAAGGDAGRAGEGAGAAGGLGRGGEARGGAAEAAETAEALDFQPPPSKLFAGRVERPISNDSIVTEAAETLSTHFDMSASTSSSSRGSSVVIEKSQAHEAAEESATGAPCKKYLFASSRDRLQLSLGGMEASLSSLHIPAAGADAGGAVHSVASFSRTAPALVTTSKALTPSQRYRLRREQNKVALQNSIKQREVFYEEQERGSRGRSASLKGVLGLPHAVDELSEDISDYLGWDVPVVSPTTGPFLAAAERSEKHTDRRPGVARSRSSTYVDHTMPPSPIPGIQKTSDLEFFTETSKKLSCVYLDTSKETSKSKLYERSQSAELLPIEFKAASDEGMEDLKLVSSGKMAVCSNSRPSWLPPKDTEERARHERQIRQTIDIASLSQIDRTKERAERDTRDEKNRKRLAQLVERGLVRKSTLTELKKICWETSLPPDSRFQIYTTLLQSDTAKLIEEQYIDNFDQVDALFRSMQFPNAKLAEIQAMLACTPCTANVAPADDLIYLLQLKAISRQGLLLGDPLLVHHLLQVGCYSTREIWVLVNILQLTCFNETTKDKYDRRIISSRGTVSTALSADKTFAQEFNSKCLNFTTWWHLMARLDHAVFMWCLDIIVAENSQPFKSNPIIRDKLNGKDWDYYRDLHVVVNYRIICALTLTVLLSYHFGFNNLYDLSFVDPAFQIIGPEQGDLGDVHATFIKKWHHNYKKF</sequence>
<proteinExistence type="inferred from homology"/>
<evidence type="ECO:0000250" key="1"/>
<evidence type="ECO:0000256" key="2">
    <source>
        <dbReference type="SAM" id="MobiDB-lite"/>
    </source>
</evidence>
<evidence type="ECO:0000305" key="3"/>
<protein>
    <recommendedName>
        <fullName>Protein SBE2</fullName>
    </recommendedName>
</protein>
<name>SBE2_EREGS</name>
<reference key="1">
    <citation type="journal article" date="2004" name="Science">
        <title>The Ashbya gossypii genome as a tool for mapping the ancient Saccharomyces cerevisiae genome.</title>
        <authorList>
            <person name="Dietrich F.S."/>
            <person name="Voegeli S."/>
            <person name="Brachat S."/>
            <person name="Lerch A."/>
            <person name="Gates K."/>
            <person name="Steiner S."/>
            <person name="Mohr C."/>
            <person name="Poehlmann R."/>
            <person name="Luedi P."/>
            <person name="Choi S."/>
            <person name="Wing R.A."/>
            <person name="Flavier A."/>
            <person name="Gaffney T.D."/>
            <person name="Philippsen P."/>
        </authorList>
    </citation>
    <scope>NUCLEOTIDE SEQUENCE [LARGE SCALE GENOMIC DNA]</scope>
    <source>
        <strain>ATCC 10895 / CBS 109.51 / FGSC 9923 / NRRL Y-1056</strain>
    </source>
</reference>
<reference key="2">
    <citation type="journal article" date="2013" name="G3 (Bethesda)">
        <title>Genomes of Ashbya fungi isolated from insects reveal four mating-type loci, numerous translocations, lack of transposons, and distinct gene duplications.</title>
        <authorList>
            <person name="Dietrich F.S."/>
            <person name="Voegeli S."/>
            <person name="Kuo S."/>
            <person name="Philippsen P."/>
        </authorList>
    </citation>
    <scope>GENOME REANNOTATION</scope>
    <scope>SEQUENCE REVISION TO 805 AND C-TERMINUS</scope>
    <source>
        <strain>ATCC 10895 / CBS 109.51 / FGSC 9923 / NRRL Y-1056</strain>
    </source>
</reference>